<organism>
    <name type="scientific">Escherichia coli (strain 55989 / EAEC)</name>
    <dbReference type="NCBI Taxonomy" id="585055"/>
    <lineage>
        <taxon>Bacteria</taxon>
        <taxon>Pseudomonadati</taxon>
        <taxon>Pseudomonadota</taxon>
        <taxon>Gammaproteobacteria</taxon>
        <taxon>Enterobacterales</taxon>
        <taxon>Enterobacteriaceae</taxon>
        <taxon>Escherichia</taxon>
    </lineage>
</organism>
<name>PLSX_ECO55</name>
<feature type="chain" id="PRO_1000193134" description="Phosphate acyltransferase">
    <location>
        <begin position="1"/>
        <end position="356"/>
    </location>
</feature>
<sequence length="356" mass="38253">MTRLTLALDVMGGDFGPSVTVPAALQALNSNSQLTLLLVGNPDAITPLLAKADFEQRSRLQIIPAQSVIASDVRPSQAIRASRGSSMRVALELVKEGRAQACVSAGNTGALMGLAKLLLKPLEGIERPALVTVLPHQQKGKTVVLDLGANVDCDSTMLVQFAIMGSVLAEEVVEIPNPRVALLNIGEEEVKGLDSIRDASAVLKTIPSINYIGYLEANELLTGKTDVLVCDGFTGNVTLKTMEGVVRMFLSLLKSQGEGKKRSWWLLLLKRWLQKSLTRRFSHLNPDQYNGACLLGLRGTVIKSHGAANQRAFAVAIEQAVQAVQRQVPQRIAARLESVYPAGFELLDGGKSGTLR</sequence>
<dbReference type="EC" id="2.3.1.274" evidence="1"/>
<dbReference type="EMBL" id="CU928145">
    <property type="protein sequence ID" value="CAU97061.1"/>
    <property type="molecule type" value="Genomic_DNA"/>
</dbReference>
<dbReference type="RefSeq" id="WP_000197585.1">
    <property type="nucleotide sequence ID" value="NC_011748.1"/>
</dbReference>
<dbReference type="SMR" id="B7LG23"/>
<dbReference type="KEGG" id="eck:EC55989_1202"/>
<dbReference type="HOGENOM" id="CLU_039379_1_0_6"/>
<dbReference type="UniPathway" id="UPA00085"/>
<dbReference type="Proteomes" id="UP000000746">
    <property type="component" value="Chromosome"/>
</dbReference>
<dbReference type="GO" id="GO:0005737">
    <property type="term" value="C:cytoplasm"/>
    <property type="evidence" value="ECO:0007669"/>
    <property type="project" value="UniProtKB-SubCell"/>
</dbReference>
<dbReference type="GO" id="GO:0043811">
    <property type="term" value="F:phosphate:acyl-[acyl carrier protein] acyltransferase activity"/>
    <property type="evidence" value="ECO:0007669"/>
    <property type="project" value="UniProtKB-UniRule"/>
</dbReference>
<dbReference type="GO" id="GO:0006633">
    <property type="term" value="P:fatty acid biosynthetic process"/>
    <property type="evidence" value="ECO:0007669"/>
    <property type="project" value="UniProtKB-UniRule"/>
</dbReference>
<dbReference type="GO" id="GO:0008654">
    <property type="term" value="P:phospholipid biosynthetic process"/>
    <property type="evidence" value="ECO:0007669"/>
    <property type="project" value="UniProtKB-KW"/>
</dbReference>
<dbReference type="FunFam" id="3.40.718.10:FF:000008">
    <property type="entry name" value="Phosphate acyltransferase"/>
    <property type="match status" value="1"/>
</dbReference>
<dbReference type="Gene3D" id="3.40.718.10">
    <property type="entry name" value="Isopropylmalate Dehydrogenase"/>
    <property type="match status" value="1"/>
</dbReference>
<dbReference type="HAMAP" id="MF_00019">
    <property type="entry name" value="PlsX"/>
    <property type="match status" value="1"/>
</dbReference>
<dbReference type="InterPro" id="IPR003664">
    <property type="entry name" value="FA_synthesis"/>
</dbReference>
<dbReference type="InterPro" id="IPR012281">
    <property type="entry name" value="Phospholipid_synth_PlsX-like"/>
</dbReference>
<dbReference type="NCBIfam" id="TIGR00182">
    <property type="entry name" value="plsX"/>
    <property type="match status" value="1"/>
</dbReference>
<dbReference type="PANTHER" id="PTHR30100">
    <property type="entry name" value="FATTY ACID/PHOSPHOLIPID SYNTHESIS PROTEIN PLSX"/>
    <property type="match status" value="1"/>
</dbReference>
<dbReference type="PANTHER" id="PTHR30100:SF1">
    <property type="entry name" value="PHOSPHATE ACYLTRANSFERASE"/>
    <property type="match status" value="1"/>
</dbReference>
<dbReference type="Pfam" id="PF02504">
    <property type="entry name" value="FA_synthesis"/>
    <property type="match status" value="1"/>
</dbReference>
<dbReference type="PIRSF" id="PIRSF002465">
    <property type="entry name" value="Phsphlp_syn_PlsX"/>
    <property type="match status" value="1"/>
</dbReference>
<dbReference type="SUPFAM" id="SSF53659">
    <property type="entry name" value="Isocitrate/Isopropylmalate dehydrogenase-like"/>
    <property type="match status" value="1"/>
</dbReference>
<proteinExistence type="inferred from homology"/>
<protein>
    <recommendedName>
        <fullName evidence="1">Phosphate acyltransferase</fullName>
        <ecNumber evidence="1">2.3.1.274</ecNumber>
    </recommendedName>
    <alternativeName>
        <fullName evidence="1">Acyl-ACP phosphotransacylase</fullName>
    </alternativeName>
    <alternativeName>
        <fullName evidence="1">Acyl-[acyl-carrier-protein]--phosphate acyltransferase</fullName>
    </alternativeName>
    <alternativeName>
        <fullName evidence="1">Phosphate-acyl-ACP acyltransferase</fullName>
    </alternativeName>
</protein>
<comment type="function">
    <text evidence="1">Catalyzes the reversible formation of acyl-phosphate (acyl-PO(4)) from acyl-[acyl-carrier-protein] (acyl-ACP). This enzyme utilizes acyl-ACP as fatty acyl donor, but not acyl-CoA.</text>
</comment>
<comment type="catalytic activity">
    <reaction evidence="1">
        <text>a fatty acyl-[ACP] + phosphate = an acyl phosphate + holo-[ACP]</text>
        <dbReference type="Rhea" id="RHEA:42292"/>
        <dbReference type="Rhea" id="RHEA-COMP:9685"/>
        <dbReference type="Rhea" id="RHEA-COMP:14125"/>
        <dbReference type="ChEBI" id="CHEBI:43474"/>
        <dbReference type="ChEBI" id="CHEBI:59918"/>
        <dbReference type="ChEBI" id="CHEBI:64479"/>
        <dbReference type="ChEBI" id="CHEBI:138651"/>
        <dbReference type="EC" id="2.3.1.274"/>
    </reaction>
</comment>
<comment type="pathway">
    <text evidence="1">Lipid metabolism; phospholipid metabolism.</text>
</comment>
<comment type="subunit">
    <text evidence="1">Homodimer. Probably interacts with PlsY.</text>
</comment>
<comment type="subcellular location">
    <subcellularLocation>
        <location evidence="1">Cytoplasm</location>
    </subcellularLocation>
    <text evidence="1">Associated with the membrane possibly through PlsY.</text>
</comment>
<comment type="similarity">
    <text evidence="1">Belongs to the PlsX family.</text>
</comment>
<accession>B7LG23</accession>
<keyword id="KW-0963">Cytoplasm</keyword>
<keyword id="KW-0444">Lipid biosynthesis</keyword>
<keyword id="KW-0443">Lipid metabolism</keyword>
<keyword id="KW-0594">Phospholipid biosynthesis</keyword>
<keyword id="KW-1208">Phospholipid metabolism</keyword>
<keyword id="KW-1185">Reference proteome</keyword>
<keyword id="KW-0808">Transferase</keyword>
<reference key="1">
    <citation type="journal article" date="2009" name="PLoS Genet.">
        <title>Organised genome dynamics in the Escherichia coli species results in highly diverse adaptive paths.</title>
        <authorList>
            <person name="Touchon M."/>
            <person name="Hoede C."/>
            <person name="Tenaillon O."/>
            <person name="Barbe V."/>
            <person name="Baeriswyl S."/>
            <person name="Bidet P."/>
            <person name="Bingen E."/>
            <person name="Bonacorsi S."/>
            <person name="Bouchier C."/>
            <person name="Bouvet O."/>
            <person name="Calteau A."/>
            <person name="Chiapello H."/>
            <person name="Clermont O."/>
            <person name="Cruveiller S."/>
            <person name="Danchin A."/>
            <person name="Diard M."/>
            <person name="Dossat C."/>
            <person name="Karoui M.E."/>
            <person name="Frapy E."/>
            <person name="Garry L."/>
            <person name="Ghigo J.M."/>
            <person name="Gilles A.M."/>
            <person name="Johnson J."/>
            <person name="Le Bouguenec C."/>
            <person name="Lescat M."/>
            <person name="Mangenot S."/>
            <person name="Martinez-Jehanne V."/>
            <person name="Matic I."/>
            <person name="Nassif X."/>
            <person name="Oztas S."/>
            <person name="Petit M.A."/>
            <person name="Pichon C."/>
            <person name="Rouy Z."/>
            <person name="Ruf C.S."/>
            <person name="Schneider D."/>
            <person name="Tourret J."/>
            <person name="Vacherie B."/>
            <person name="Vallenet D."/>
            <person name="Medigue C."/>
            <person name="Rocha E.P.C."/>
            <person name="Denamur E."/>
        </authorList>
    </citation>
    <scope>NUCLEOTIDE SEQUENCE [LARGE SCALE GENOMIC DNA]</scope>
    <source>
        <strain>55989 / EAEC</strain>
    </source>
</reference>
<gene>
    <name evidence="1" type="primary">plsX</name>
    <name type="ordered locus">EC55989_1202</name>
</gene>
<evidence type="ECO:0000255" key="1">
    <source>
        <dbReference type="HAMAP-Rule" id="MF_00019"/>
    </source>
</evidence>